<reference key="1">
    <citation type="journal article" date="2005" name="J. Mol. Evol.">
        <title>Explosive lineage-specific expansion of the orphan nuclear receptor HNF4 in nematodes.</title>
        <authorList>
            <person name="Robinson-Rechavi M."/>
            <person name="Maina C.V."/>
            <person name="Gissendanner C.R."/>
            <person name="Laudet V."/>
            <person name="Sluder A."/>
        </authorList>
    </citation>
    <scope>NUCLEOTIDE SEQUENCE [MRNA]</scope>
</reference>
<reference key="2">
    <citation type="journal article" date="1998" name="Science">
        <title>Genome sequence of the nematode C. elegans: a platform for investigating biology.</title>
        <authorList>
            <consortium name="The C. elegans sequencing consortium"/>
        </authorList>
    </citation>
    <scope>NUCLEOTIDE SEQUENCE [LARGE SCALE GENOMIC DNA]</scope>
    <source>
        <strain>Bristol N2</strain>
    </source>
</reference>
<name>NH108_CAEEL</name>
<dbReference type="EMBL" id="AY204193">
    <property type="protein sequence ID" value="AAO39197.1"/>
    <property type="molecule type" value="mRNA"/>
</dbReference>
<dbReference type="EMBL" id="Z81529">
    <property type="protein sequence ID" value="CAB04290.1"/>
    <property type="molecule type" value="Genomic_DNA"/>
</dbReference>
<dbReference type="PIR" id="T21784">
    <property type="entry name" value="T21784"/>
</dbReference>
<dbReference type="RefSeq" id="NP_506987.1">
    <property type="nucleotide sequence ID" value="NM_074586.5"/>
</dbReference>
<dbReference type="SMR" id="O45449"/>
<dbReference type="BioGRID" id="45056">
    <property type="interactions" value="1"/>
</dbReference>
<dbReference type="DIP" id="DIP-25366N"/>
<dbReference type="FunCoup" id="O45449">
    <property type="interactions" value="188"/>
</dbReference>
<dbReference type="IntAct" id="O45449">
    <property type="interactions" value="1"/>
</dbReference>
<dbReference type="STRING" id="6239.F35E8.12.1"/>
<dbReference type="PaxDb" id="6239-F35E8.12"/>
<dbReference type="EnsemblMetazoa" id="F35E8.12.1">
    <property type="protein sequence ID" value="F35E8.12.1"/>
    <property type="gene ID" value="WBGene00003698"/>
</dbReference>
<dbReference type="EnsemblMetazoa" id="F35E8.12.2">
    <property type="protein sequence ID" value="F35E8.12.2"/>
    <property type="gene ID" value="WBGene00003698"/>
</dbReference>
<dbReference type="GeneID" id="180065"/>
<dbReference type="KEGG" id="cel:CELE_F35E8.12"/>
<dbReference type="UCSC" id="F35E8.12">
    <property type="organism name" value="c. elegans"/>
</dbReference>
<dbReference type="AGR" id="WB:WBGene00003698"/>
<dbReference type="CTD" id="180065"/>
<dbReference type="WormBase" id="F35E8.12">
    <property type="protein sequence ID" value="CE15962"/>
    <property type="gene ID" value="WBGene00003698"/>
    <property type="gene designation" value="nhr-108"/>
</dbReference>
<dbReference type="eggNOG" id="KOG3575">
    <property type="taxonomic scope" value="Eukaryota"/>
</dbReference>
<dbReference type="GeneTree" id="ENSGT00970000196002"/>
<dbReference type="HOGENOM" id="CLU_007368_1_1_1"/>
<dbReference type="InParanoid" id="O45449"/>
<dbReference type="OMA" id="SAREKTF"/>
<dbReference type="OrthoDB" id="5771769at2759"/>
<dbReference type="PhylomeDB" id="O45449"/>
<dbReference type="PRO" id="PR:O45449"/>
<dbReference type="Proteomes" id="UP000001940">
    <property type="component" value="Chromosome V"/>
</dbReference>
<dbReference type="Bgee" id="WBGene00003698">
    <property type="expression patterns" value="Expressed in adult organism and 2 other cell types or tissues"/>
</dbReference>
<dbReference type="GO" id="GO:0005634">
    <property type="term" value="C:nucleus"/>
    <property type="evidence" value="ECO:0000318"/>
    <property type="project" value="GO_Central"/>
</dbReference>
<dbReference type="GO" id="GO:0003700">
    <property type="term" value="F:DNA-binding transcription factor activity"/>
    <property type="evidence" value="ECO:0000318"/>
    <property type="project" value="GO_Central"/>
</dbReference>
<dbReference type="GO" id="GO:0043565">
    <property type="term" value="F:sequence-specific DNA binding"/>
    <property type="evidence" value="ECO:0007669"/>
    <property type="project" value="InterPro"/>
</dbReference>
<dbReference type="GO" id="GO:0008270">
    <property type="term" value="F:zinc ion binding"/>
    <property type="evidence" value="ECO:0007669"/>
    <property type="project" value="UniProtKB-KW"/>
</dbReference>
<dbReference type="GO" id="GO:0006357">
    <property type="term" value="P:regulation of transcription by RNA polymerase II"/>
    <property type="evidence" value="ECO:0000318"/>
    <property type="project" value="GO_Central"/>
</dbReference>
<dbReference type="Gene3D" id="3.30.50.10">
    <property type="entry name" value="Erythroid Transcription Factor GATA-1, subunit A"/>
    <property type="match status" value="1"/>
</dbReference>
<dbReference type="Gene3D" id="1.10.565.10">
    <property type="entry name" value="Retinoid X Receptor"/>
    <property type="match status" value="1"/>
</dbReference>
<dbReference type="InterPro" id="IPR035500">
    <property type="entry name" value="NHR-like_dom_sf"/>
</dbReference>
<dbReference type="InterPro" id="IPR000536">
    <property type="entry name" value="Nucl_hrmn_rcpt_lig-bd"/>
</dbReference>
<dbReference type="InterPro" id="IPR001628">
    <property type="entry name" value="Znf_hrmn_rcpt"/>
</dbReference>
<dbReference type="InterPro" id="IPR013088">
    <property type="entry name" value="Znf_NHR/GATA"/>
</dbReference>
<dbReference type="PANTHER" id="PTHR46011">
    <property type="entry name" value="NUCLEAR HORMONE RECEPTOR FAMILY MEMBER NHR-86-RELATED"/>
    <property type="match status" value="1"/>
</dbReference>
<dbReference type="PANTHER" id="PTHR46011:SF17">
    <property type="entry name" value="NUCLEAR HORMONE RECEPTOR FAMILY-RELATED"/>
    <property type="match status" value="1"/>
</dbReference>
<dbReference type="Pfam" id="PF00104">
    <property type="entry name" value="Hormone_recep"/>
    <property type="match status" value="1"/>
</dbReference>
<dbReference type="Pfam" id="PF00105">
    <property type="entry name" value="zf-C4"/>
    <property type="match status" value="1"/>
</dbReference>
<dbReference type="PRINTS" id="PR00047">
    <property type="entry name" value="STROIDFINGER"/>
</dbReference>
<dbReference type="SMART" id="SM00430">
    <property type="entry name" value="HOLI"/>
    <property type="match status" value="1"/>
</dbReference>
<dbReference type="SMART" id="SM00399">
    <property type="entry name" value="ZnF_C4"/>
    <property type="match status" value="1"/>
</dbReference>
<dbReference type="SUPFAM" id="SSF57716">
    <property type="entry name" value="Glucocorticoid receptor-like (DNA-binding domain)"/>
    <property type="match status" value="1"/>
</dbReference>
<dbReference type="SUPFAM" id="SSF48508">
    <property type="entry name" value="Nuclear receptor ligand-binding domain"/>
    <property type="match status" value="1"/>
</dbReference>
<dbReference type="PROSITE" id="PS51843">
    <property type="entry name" value="NR_LBD"/>
    <property type="match status" value="1"/>
</dbReference>
<dbReference type="PROSITE" id="PS51030">
    <property type="entry name" value="NUCLEAR_REC_DBD_2"/>
    <property type="match status" value="1"/>
</dbReference>
<sequence length="338" mass="39406">MSKKSENQPCMVCGEISYSIRFGAVSCRACAEFFRRKIVSKARIPKRCNGACDLGKYHRKTCQSCRFQKCLKIGMLEKVVASRTPVNRRSENNQTILSGLEKAYDKLENSRDNVFDRKNKIPKYCNHQELDDMFEIDIKLISTHFIQFFESKSSLENNQNKVLSTHFIIRFSLLEVAFRAFGKPTYILPNNDIIDVSKLDKVYQHLETGEDERGKNSQVILQRFWQMNEKTMKTEVFPVNLDQSEFLFLCALIYWDFGIENQSEKCLEECQRMRTQVLKELTEYEKSNYPENELRVAQVIGILQALQKTLDVIQHSGYISNVYNLKGKQCPLYEATNE</sequence>
<gene>
    <name type="primary">nhr-108</name>
    <name type="ORF">F35E8.12</name>
</gene>
<keyword id="KW-0238">DNA-binding</keyword>
<keyword id="KW-0479">Metal-binding</keyword>
<keyword id="KW-0539">Nucleus</keyword>
<keyword id="KW-0675">Receptor</keyword>
<keyword id="KW-1185">Reference proteome</keyword>
<keyword id="KW-0804">Transcription</keyword>
<keyword id="KW-0805">Transcription regulation</keyword>
<keyword id="KW-0862">Zinc</keyword>
<keyword id="KW-0863">Zinc-finger</keyword>
<organism>
    <name type="scientific">Caenorhabditis elegans</name>
    <dbReference type="NCBI Taxonomy" id="6239"/>
    <lineage>
        <taxon>Eukaryota</taxon>
        <taxon>Metazoa</taxon>
        <taxon>Ecdysozoa</taxon>
        <taxon>Nematoda</taxon>
        <taxon>Chromadorea</taxon>
        <taxon>Rhabditida</taxon>
        <taxon>Rhabditina</taxon>
        <taxon>Rhabditomorpha</taxon>
        <taxon>Rhabditoidea</taxon>
        <taxon>Rhabditidae</taxon>
        <taxon>Peloderinae</taxon>
        <taxon>Caenorhabditis</taxon>
    </lineage>
</organism>
<accession>O45449</accession>
<feature type="chain" id="PRO_0000223588" description="Nuclear hormone receptor family member nhr-108">
    <location>
        <begin position="1"/>
        <end position="338"/>
    </location>
</feature>
<feature type="domain" description="NR LBD" evidence="2">
    <location>
        <begin position="92"/>
        <end position="338"/>
    </location>
</feature>
<feature type="DNA-binding region" description="Nuclear receptor" evidence="1">
    <location>
        <begin position="7"/>
        <end position="82"/>
    </location>
</feature>
<feature type="zinc finger region" description="NR C4-type" evidence="1">
    <location>
        <begin position="10"/>
        <end position="30"/>
    </location>
</feature>
<feature type="zinc finger region" description="NR C4-type; degenerate" evidence="1">
    <location>
        <begin position="46"/>
        <end position="65"/>
    </location>
</feature>
<comment type="function">
    <text>Orphan nuclear receptor.</text>
</comment>
<comment type="subcellular location">
    <subcellularLocation>
        <location evidence="1">Nucleus</location>
    </subcellularLocation>
</comment>
<comment type="similarity">
    <text evidence="3">Belongs to the nuclear hormone receptor family.</text>
</comment>
<evidence type="ECO:0000255" key="1">
    <source>
        <dbReference type="PROSITE-ProRule" id="PRU00407"/>
    </source>
</evidence>
<evidence type="ECO:0000255" key="2">
    <source>
        <dbReference type="PROSITE-ProRule" id="PRU01189"/>
    </source>
</evidence>
<evidence type="ECO:0000305" key="3"/>
<protein>
    <recommendedName>
        <fullName>Nuclear hormone receptor family member nhr-108</fullName>
    </recommendedName>
</protein>
<proteinExistence type="evidence at transcript level"/>